<proteinExistence type="inferred from homology"/>
<accession>A9BEE9</accession>
<evidence type="ECO:0000255" key="1">
    <source>
        <dbReference type="HAMAP-Rule" id="MF_00323"/>
    </source>
</evidence>
<sequence>MTRVGILLMNLGGPERIKDVGPFLYNLFSDPEIIRIPIPFFQKPLAWLISTLRSSRSQQAYQSIGGGSPLRRITEQQARELQSELRQRGVNATSYVAMRYWHPFTESAVSDIKADGINQVVVLPLYPQFSISTSGSSFRELRRLREADPQFRKLPIRCIRSWFNNEGYIASMAKLIEDEILLCNDPENAHIFFTAHGVPKSYVEEAGDPYKDEIEDCSILIIDQLEKALGYINPYTLSYQSRVGPEEWLQPYTEDVLAELGESGTKELVVVPISFVSEHIETLQEIDIEYKEIAKEHGIDNFRRVRALDTYPMFIKGLADLVTSCLEGPEISLDEASKLPDRVKLYPQEKWQWGWNNSAEVWNGRVAMFVFIICLLELVIGNGPLHYLGLL</sequence>
<reference key="1">
    <citation type="journal article" date="2007" name="PLoS Genet.">
        <title>Patterns and implications of gene gain and loss in the evolution of Prochlorococcus.</title>
        <authorList>
            <person name="Kettler G.C."/>
            <person name="Martiny A.C."/>
            <person name="Huang K."/>
            <person name="Zucker J."/>
            <person name="Coleman M.L."/>
            <person name="Rodrigue S."/>
            <person name="Chen F."/>
            <person name="Lapidus A."/>
            <person name="Ferriera S."/>
            <person name="Johnson J."/>
            <person name="Steglich C."/>
            <person name="Church G.M."/>
            <person name="Richardson P."/>
            <person name="Chisholm S.W."/>
        </authorList>
    </citation>
    <scope>NUCLEOTIDE SEQUENCE [LARGE SCALE GENOMIC DNA]</scope>
    <source>
        <strain>MIT 9211</strain>
    </source>
</reference>
<dbReference type="EC" id="4.98.1.1" evidence="1"/>
<dbReference type="EMBL" id="CP000878">
    <property type="protein sequence ID" value="ABX08459.1"/>
    <property type="molecule type" value="Genomic_DNA"/>
</dbReference>
<dbReference type="RefSeq" id="WP_012195082.1">
    <property type="nucleotide sequence ID" value="NC_009976.1"/>
</dbReference>
<dbReference type="SMR" id="A9BEE9"/>
<dbReference type="STRING" id="93059.P9211_05281"/>
<dbReference type="KEGG" id="pmj:P9211_05281"/>
<dbReference type="eggNOG" id="COG0276">
    <property type="taxonomic scope" value="Bacteria"/>
</dbReference>
<dbReference type="HOGENOM" id="CLU_018884_4_3_3"/>
<dbReference type="OrthoDB" id="9809741at2"/>
<dbReference type="UniPathway" id="UPA00252">
    <property type="reaction ID" value="UER00325"/>
</dbReference>
<dbReference type="Proteomes" id="UP000000788">
    <property type="component" value="Chromosome"/>
</dbReference>
<dbReference type="GO" id="GO:0005737">
    <property type="term" value="C:cytoplasm"/>
    <property type="evidence" value="ECO:0007669"/>
    <property type="project" value="UniProtKB-SubCell"/>
</dbReference>
<dbReference type="GO" id="GO:0004325">
    <property type="term" value="F:ferrochelatase activity"/>
    <property type="evidence" value="ECO:0007669"/>
    <property type="project" value="UniProtKB-UniRule"/>
</dbReference>
<dbReference type="GO" id="GO:0046872">
    <property type="term" value="F:metal ion binding"/>
    <property type="evidence" value="ECO:0007669"/>
    <property type="project" value="UniProtKB-KW"/>
</dbReference>
<dbReference type="GO" id="GO:0006783">
    <property type="term" value="P:heme biosynthetic process"/>
    <property type="evidence" value="ECO:0007669"/>
    <property type="project" value="UniProtKB-UniRule"/>
</dbReference>
<dbReference type="CDD" id="cd00419">
    <property type="entry name" value="Ferrochelatase_C"/>
    <property type="match status" value="1"/>
</dbReference>
<dbReference type="CDD" id="cd03411">
    <property type="entry name" value="Ferrochelatase_N"/>
    <property type="match status" value="1"/>
</dbReference>
<dbReference type="FunFam" id="3.40.50.1400:FF:000006">
    <property type="entry name" value="Ferrochelatase"/>
    <property type="match status" value="1"/>
</dbReference>
<dbReference type="Gene3D" id="3.40.50.1400">
    <property type="match status" value="2"/>
</dbReference>
<dbReference type="HAMAP" id="MF_00323">
    <property type="entry name" value="Ferrochelatase"/>
    <property type="match status" value="1"/>
</dbReference>
<dbReference type="InterPro" id="IPR001015">
    <property type="entry name" value="Ferrochelatase"/>
</dbReference>
<dbReference type="InterPro" id="IPR019772">
    <property type="entry name" value="Ferrochelatase_AS"/>
</dbReference>
<dbReference type="InterPro" id="IPR033644">
    <property type="entry name" value="Ferrochelatase_C"/>
</dbReference>
<dbReference type="InterPro" id="IPR033659">
    <property type="entry name" value="Ferrochelatase_N"/>
</dbReference>
<dbReference type="NCBIfam" id="TIGR00109">
    <property type="entry name" value="hemH"/>
    <property type="match status" value="1"/>
</dbReference>
<dbReference type="PANTHER" id="PTHR11108">
    <property type="entry name" value="FERROCHELATASE"/>
    <property type="match status" value="1"/>
</dbReference>
<dbReference type="PANTHER" id="PTHR11108:SF1">
    <property type="entry name" value="FERROCHELATASE, MITOCHONDRIAL"/>
    <property type="match status" value="1"/>
</dbReference>
<dbReference type="Pfam" id="PF00762">
    <property type="entry name" value="Ferrochelatase"/>
    <property type="match status" value="1"/>
</dbReference>
<dbReference type="SUPFAM" id="SSF53800">
    <property type="entry name" value="Chelatase"/>
    <property type="match status" value="1"/>
</dbReference>
<dbReference type="SUPFAM" id="SSF103511">
    <property type="entry name" value="Chlorophyll a-b binding protein"/>
    <property type="match status" value="1"/>
</dbReference>
<dbReference type="PROSITE" id="PS00534">
    <property type="entry name" value="FERROCHELATASE"/>
    <property type="match status" value="1"/>
</dbReference>
<gene>
    <name evidence="1" type="primary">hemH</name>
    <name type="ordered locus">P9211_05281</name>
</gene>
<organism>
    <name type="scientific">Prochlorococcus marinus (strain MIT 9211)</name>
    <dbReference type="NCBI Taxonomy" id="93059"/>
    <lineage>
        <taxon>Bacteria</taxon>
        <taxon>Bacillati</taxon>
        <taxon>Cyanobacteriota</taxon>
        <taxon>Cyanophyceae</taxon>
        <taxon>Synechococcales</taxon>
        <taxon>Prochlorococcaceae</taxon>
        <taxon>Prochlorococcus</taxon>
    </lineage>
</organism>
<keyword id="KW-0963">Cytoplasm</keyword>
<keyword id="KW-0350">Heme biosynthesis</keyword>
<keyword id="KW-0408">Iron</keyword>
<keyword id="KW-0456">Lyase</keyword>
<keyword id="KW-0479">Metal-binding</keyword>
<keyword id="KW-0627">Porphyrin biosynthesis</keyword>
<keyword id="KW-1185">Reference proteome</keyword>
<comment type="function">
    <text evidence="1">Catalyzes the ferrous insertion into protoporphyrin IX.</text>
</comment>
<comment type="catalytic activity">
    <reaction evidence="1">
        <text>heme b + 2 H(+) = protoporphyrin IX + Fe(2+)</text>
        <dbReference type="Rhea" id="RHEA:22584"/>
        <dbReference type="ChEBI" id="CHEBI:15378"/>
        <dbReference type="ChEBI" id="CHEBI:29033"/>
        <dbReference type="ChEBI" id="CHEBI:57306"/>
        <dbReference type="ChEBI" id="CHEBI:60344"/>
        <dbReference type="EC" id="4.98.1.1"/>
    </reaction>
</comment>
<comment type="pathway">
    <text evidence="1">Porphyrin-containing compound metabolism; protoheme biosynthesis; protoheme from protoporphyrin-IX: step 1/1.</text>
</comment>
<comment type="subcellular location">
    <subcellularLocation>
        <location evidence="1">Cytoplasm</location>
    </subcellularLocation>
</comment>
<comment type="similarity">
    <text evidence="1">Belongs to the ferrochelatase family.</text>
</comment>
<feature type="chain" id="PRO_1000116066" description="Ferrochelatase">
    <location>
        <begin position="1"/>
        <end position="391"/>
    </location>
</feature>
<feature type="binding site" evidence="1">
    <location>
        <position position="196"/>
    </location>
    <ligand>
        <name>Fe cation</name>
        <dbReference type="ChEBI" id="CHEBI:24875"/>
    </ligand>
</feature>
<feature type="binding site" evidence="1">
    <location>
        <position position="281"/>
    </location>
    <ligand>
        <name>Fe cation</name>
        <dbReference type="ChEBI" id="CHEBI:24875"/>
    </ligand>
</feature>
<protein>
    <recommendedName>
        <fullName evidence="1">Ferrochelatase</fullName>
        <ecNumber evidence="1">4.98.1.1</ecNumber>
    </recommendedName>
    <alternativeName>
        <fullName evidence="1">Heme synthase</fullName>
    </alternativeName>
    <alternativeName>
        <fullName evidence="1">Protoheme ferro-lyase</fullName>
    </alternativeName>
</protein>
<name>HEMH_PROM4</name>